<accession>B9KHN2</accession>
<organism>
    <name type="scientific">Anaplasma marginale (strain Florida)</name>
    <dbReference type="NCBI Taxonomy" id="320483"/>
    <lineage>
        <taxon>Bacteria</taxon>
        <taxon>Pseudomonadati</taxon>
        <taxon>Pseudomonadota</taxon>
        <taxon>Alphaproteobacteria</taxon>
        <taxon>Rickettsiales</taxon>
        <taxon>Anaplasmataceae</taxon>
        <taxon>Anaplasma</taxon>
    </lineage>
</organism>
<proteinExistence type="inferred from homology"/>
<protein>
    <recommendedName>
        <fullName evidence="1">UDP-N-acetylglucosamine 1-carboxyvinyltransferase</fullName>
        <ecNumber evidence="1">2.5.1.7</ecNumber>
    </recommendedName>
    <alternativeName>
        <fullName evidence="1">Enoylpyruvate transferase</fullName>
    </alternativeName>
    <alternativeName>
        <fullName evidence="1">UDP-N-acetylglucosamine enolpyruvyl transferase</fullName>
        <shortName evidence="1">EPT</shortName>
    </alternativeName>
</protein>
<feature type="chain" id="PRO_1000192074" description="UDP-N-acetylglucosamine 1-carboxyvinyltransferase">
    <location>
        <begin position="1"/>
        <end position="428"/>
    </location>
</feature>
<feature type="active site" description="Proton donor" evidence="1">
    <location>
        <position position="126"/>
    </location>
</feature>
<feature type="binding site" evidence="1">
    <location>
        <begin position="25"/>
        <end position="26"/>
    </location>
    <ligand>
        <name>phosphoenolpyruvate</name>
        <dbReference type="ChEBI" id="CHEBI:58702"/>
    </ligand>
</feature>
<feature type="binding site" evidence="1">
    <location>
        <position position="102"/>
    </location>
    <ligand>
        <name>UDP-N-acetyl-alpha-D-glucosamine</name>
        <dbReference type="ChEBI" id="CHEBI:57705"/>
    </ligand>
</feature>
<feature type="binding site" evidence="1">
    <location>
        <position position="316"/>
    </location>
    <ligand>
        <name>UDP-N-acetyl-alpha-D-glucosamine</name>
        <dbReference type="ChEBI" id="CHEBI:57705"/>
    </ligand>
</feature>
<feature type="binding site" evidence="1">
    <location>
        <position position="338"/>
    </location>
    <ligand>
        <name>UDP-N-acetyl-alpha-D-glucosamine</name>
        <dbReference type="ChEBI" id="CHEBI:57705"/>
    </ligand>
</feature>
<feature type="modified residue" description="2-(S-cysteinyl)pyruvic acid O-phosphothioketal" evidence="1">
    <location>
        <position position="126"/>
    </location>
</feature>
<sequence>MVEASLRVSGSTNPISGRIVANGAKNSALPIMAACLLLNGSVVLAGMPDLRDVTVMSELITSLGGRISFLRNTKEKANHKVEINCDNLHNWAIPHEITSQMRASCLTLGPILTRMGRAEVALPGGCSIGSRPLDMHIWALQKLGAKVEVCGNYVKCSSSGKLVGCHIDFQSVSVGATENALMAAVMAHGTTTISNAAIEPEVADLAHFLVKAGAQISGIGTRTLQICGVQQLSGPSHTIIRDRMEAGTYALAAISTGGSVHIAGVTSEMLGCLAHELEGMGGKVTDVPDGLVVLRHSPQINPVVLHTAPYPGFPSDMQAQFAATACLARGTSQIHEHVFDRRFSYARELAKMGADIHVQGNTASIRGVDKLHGASVQAPDLRASAALLIAGLSAQGVTTISNVQTLYRGYEAMEEKLRACGAEVELVR</sequence>
<keyword id="KW-0131">Cell cycle</keyword>
<keyword id="KW-0132">Cell division</keyword>
<keyword id="KW-0133">Cell shape</keyword>
<keyword id="KW-0961">Cell wall biogenesis/degradation</keyword>
<keyword id="KW-0963">Cytoplasm</keyword>
<keyword id="KW-0573">Peptidoglycan synthesis</keyword>
<keyword id="KW-0670">Pyruvate</keyword>
<keyword id="KW-1185">Reference proteome</keyword>
<keyword id="KW-0808">Transferase</keyword>
<dbReference type="EC" id="2.5.1.7" evidence="1"/>
<dbReference type="EMBL" id="CP001079">
    <property type="protein sequence ID" value="ACM48994.1"/>
    <property type="molecule type" value="Genomic_DNA"/>
</dbReference>
<dbReference type="RefSeq" id="WP_010267075.1">
    <property type="nucleotide sequence ID" value="NZ_AFMS01000025.1"/>
</dbReference>
<dbReference type="SMR" id="B9KHN2"/>
<dbReference type="STRING" id="320483.AMF_106"/>
<dbReference type="GeneID" id="7398822"/>
<dbReference type="KEGG" id="amf:AMF_106"/>
<dbReference type="PATRIC" id="fig|320483.3.peg.125"/>
<dbReference type="eggNOG" id="COG0766">
    <property type="taxonomic scope" value="Bacteria"/>
</dbReference>
<dbReference type="HOGENOM" id="CLU_027387_0_0_5"/>
<dbReference type="UniPathway" id="UPA00219"/>
<dbReference type="Proteomes" id="UP000007307">
    <property type="component" value="Chromosome"/>
</dbReference>
<dbReference type="GO" id="GO:0005737">
    <property type="term" value="C:cytoplasm"/>
    <property type="evidence" value="ECO:0007669"/>
    <property type="project" value="UniProtKB-SubCell"/>
</dbReference>
<dbReference type="GO" id="GO:0008760">
    <property type="term" value="F:UDP-N-acetylglucosamine 1-carboxyvinyltransferase activity"/>
    <property type="evidence" value="ECO:0007669"/>
    <property type="project" value="UniProtKB-UniRule"/>
</dbReference>
<dbReference type="GO" id="GO:0051301">
    <property type="term" value="P:cell division"/>
    <property type="evidence" value="ECO:0007669"/>
    <property type="project" value="UniProtKB-KW"/>
</dbReference>
<dbReference type="GO" id="GO:0071555">
    <property type="term" value="P:cell wall organization"/>
    <property type="evidence" value="ECO:0007669"/>
    <property type="project" value="UniProtKB-KW"/>
</dbReference>
<dbReference type="GO" id="GO:0009252">
    <property type="term" value="P:peptidoglycan biosynthetic process"/>
    <property type="evidence" value="ECO:0007669"/>
    <property type="project" value="UniProtKB-UniRule"/>
</dbReference>
<dbReference type="GO" id="GO:0008360">
    <property type="term" value="P:regulation of cell shape"/>
    <property type="evidence" value="ECO:0007669"/>
    <property type="project" value="UniProtKB-KW"/>
</dbReference>
<dbReference type="GO" id="GO:0019277">
    <property type="term" value="P:UDP-N-acetylgalactosamine biosynthetic process"/>
    <property type="evidence" value="ECO:0007669"/>
    <property type="project" value="InterPro"/>
</dbReference>
<dbReference type="CDD" id="cd01555">
    <property type="entry name" value="UdpNAET"/>
    <property type="match status" value="1"/>
</dbReference>
<dbReference type="Gene3D" id="3.65.10.10">
    <property type="entry name" value="Enolpyruvate transferase domain"/>
    <property type="match status" value="2"/>
</dbReference>
<dbReference type="HAMAP" id="MF_00111">
    <property type="entry name" value="MurA"/>
    <property type="match status" value="1"/>
</dbReference>
<dbReference type="InterPro" id="IPR001986">
    <property type="entry name" value="Enolpyruvate_Tfrase_dom"/>
</dbReference>
<dbReference type="InterPro" id="IPR036968">
    <property type="entry name" value="Enolpyruvate_Tfrase_sf"/>
</dbReference>
<dbReference type="InterPro" id="IPR050068">
    <property type="entry name" value="MurA_subfamily"/>
</dbReference>
<dbReference type="InterPro" id="IPR013792">
    <property type="entry name" value="RNA3'P_cycl/enolpyr_Trfase_a/b"/>
</dbReference>
<dbReference type="InterPro" id="IPR005750">
    <property type="entry name" value="UDP_GlcNAc_COvinyl_MurA"/>
</dbReference>
<dbReference type="NCBIfam" id="TIGR01072">
    <property type="entry name" value="murA"/>
    <property type="match status" value="1"/>
</dbReference>
<dbReference type="NCBIfam" id="NF006873">
    <property type="entry name" value="PRK09369.1"/>
    <property type="match status" value="1"/>
</dbReference>
<dbReference type="PANTHER" id="PTHR43783">
    <property type="entry name" value="UDP-N-ACETYLGLUCOSAMINE 1-CARBOXYVINYLTRANSFERASE"/>
    <property type="match status" value="1"/>
</dbReference>
<dbReference type="PANTHER" id="PTHR43783:SF1">
    <property type="entry name" value="UDP-N-ACETYLGLUCOSAMINE 1-CARBOXYVINYLTRANSFERASE"/>
    <property type="match status" value="1"/>
</dbReference>
<dbReference type="Pfam" id="PF00275">
    <property type="entry name" value="EPSP_synthase"/>
    <property type="match status" value="1"/>
</dbReference>
<dbReference type="SUPFAM" id="SSF55205">
    <property type="entry name" value="EPT/RTPC-like"/>
    <property type="match status" value="1"/>
</dbReference>
<name>MURA_ANAMF</name>
<reference key="1">
    <citation type="journal article" date="2009" name="BMC Genomics">
        <title>Conservation in the face of diversity: multistrain analysis of an intracellular bacterium.</title>
        <authorList>
            <person name="Dark M.J."/>
            <person name="Herndon D.R."/>
            <person name="Kappmeyer L.S."/>
            <person name="Gonzales M.P."/>
            <person name="Nordeen E."/>
            <person name="Palmer G.H."/>
            <person name="Knowles D.P. Jr."/>
            <person name="Brayton K.A."/>
        </authorList>
    </citation>
    <scope>NUCLEOTIDE SEQUENCE [LARGE SCALE GENOMIC DNA]</scope>
    <source>
        <strain>Florida</strain>
    </source>
</reference>
<gene>
    <name evidence="1" type="primary">murA</name>
    <name type="ordered locus">AMF_106</name>
</gene>
<comment type="function">
    <text evidence="1">Cell wall formation. Adds enolpyruvyl to UDP-N-acetylglucosamine.</text>
</comment>
<comment type="catalytic activity">
    <reaction evidence="1">
        <text>phosphoenolpyruvate + UDP-N-acetyl-alpha-D-glucosamine = UDP-N-acetyl-3-O-(1-carboxyvinyl)-alpha-D-glucosamine + phosphate</text>
        <dbReference type="Rhea" id="RHEA:18681"/>
        <dbReference type="ChEBI" id="CHEBI:43474"/>
        <dbReference type="ChEBI" id="CHEBI:57705"/>
        <dbReference type="ChEBI" id="CHEBI:58702"/>
        <dbReference type="ChEBI" id="CHEBI:68483"/>
        <dbReference type="EC" id="2.5.1.7"/>
    </reaction>
</comment>
<comment type="pathway">
    <text evidence="1">Cell wall biogenesis; peptidoglycan biosynthesis.</text>
</comment>
<comment type="subcellular location">
    <subcellularLocation>
        <location evidence="1">Cytoplasm</location>
    </subcellularLocation>
</comment>
<comment type="similarity">
    <text evidence="1">Belongs to the EPSP synthase family. MurA subfamily.</text>
</comment>
<evidence type="ECO:0000255" key="1">
    <source>
        <dbReference type="HAMAP-Rule" id="MF_00111"/>
    </source>
</evidence>